<evidence type="ECO:0000255" key="1">
    <source>
        <dbReference type="HAMAP-Rule" id="MF_00022"/>
    </source>
</evidence>
<evidence type="ECO:0000305" key="2"/>
<name>SYE1_BRUO2</name>
<gene>
    <name evidence="1" type="primary">gltX1</name>
    <name type="ordered locus">BOV_0983</name>
</gene>
<reference key="1">
    <citation type="journal article" date="2009" name="PLoS ONE">
        <title>Genome degradation in Brucella ovis corresponds with narrowing of its host range and tissue tropism.</title>
        <authorList>
            <person name="Tsolis R.M."/>
            <person name="Seshadri R."/>
            <person name="Santos R.L."/>
            <person name="Sangari F.J."/>
            <person name="Lobo J.M."/>
            <person name="de Jong M.F."/>
            <person name="Ren Q."/>
            <person name="Myers G."/>
            <person name="Brinkac L.M."/>
            <person name="Nelson W.C."/>
            <person name="Deboy R.T."/>
            <person name="Angiuoli S."/>
            <person name="Khouri H."/>
            <person name="Dimitrov G."/>
            <person name="Robinson J.R."/>
            <person name="Mulligan S."/>
            <person name="Walker R.L."/>
            <person name="Elzer P.E."/>
            <person name="Hassan K.A."/>
            <person name="Paulsen I.T."/>
        </authorList>
    </citation>
    <scope>NUCLEOTIDE SEQUENCE [LARGE SCALE GENOMIC DNA]</scope>
    <source>
        <strain>ATCC 25840 / 63/290 / NCTC 10512</strain>
    </source>
</reference>
<organism>
    <name type="scientific">Brucella ovis (strain ATCC 25840 / 63/290 / NCTC 10512)</name>
    <dbReference type="NCBI Taxonomy" id="444178"/>
    <lineage>
        <taxon>Bacteria</taxon>
        <taxon>Pseudomonadati</taxon>
        <taxon>Pseudomonadota</taxon>
        <taxon>Alphaproteobacteria</taxon>
        <taxon>Hyphomicrobiales</taxon>
        <taxon>Brucellaceae</taxon>
        <taxon>Brucella/Ochrobactrum group</taxon>
        <taxon>Brucella</taxon>
    </lineage>
</organism>
<keyword id="KW-0030">Aminoacyl-tRNA synthetase</keyword>
<keyword id="KW-0067">ATP-binding</keyword>
<keyword id="KW-0963">Cytoplasm</keyword>
<keyword id="KW-0436">Ligase</keyword>
<keyword id="KW-0547">Nucleotide-binding</keyword>
<keyword id="KW-0648">Protein biosynthesis</keyword>
<sequence length="457" mass="50794">MTVTVRFAPSPTGYIHIGNTRTALSNWLYASKNNGKFILRYDDTDVERSKDEYAQAIAVDLDWLGVRPDRVEYQSKRFDIYAKAVEKLKTAGLLYACYETADELERRRKLRLARRLPPVYGREALKLTDAEKAALEAEGRKPHWRFLLPNFESDPFATQRTEVHWDDLVRGPQTVDLASMSDPILVREDGTYLYTLPSVVDDIDMGVTHIIRGDDHVTNTGVQISIFKALGATPPVFGHHNLLTTISGEGLSKRTGALSVGSLREAGYEPMAVASLAILIGTSESVTAAPDMAALAEHFDLASISKSSAKFDPSELDALNRSLLHEMPFEKAKPRLEALGICGAKAESFWLAVRGNLDRFSDVSHWWQVVSGDLPEAPDLSGEDRDFVRHAFDLLPPEPWNGQTWKSWTEAVKSATGRKGKNLFMPLRLALTGQAHGPELADLLVLVGLERTKSRRP</sequence>
<feature type="chain" id="PRO_0000367625" description="Glutamate--tRNA ligase 1">
    <location>
        <begin position="1"/>
        <end position="457"/>
    </location>
</feature>
<feature type="short sequence motif" description="'HIGH' region" evidence="1">
    <location>
        <begin position="9"/>
        <end position="19"/>
    </location>
</feature>
<feature type="short sequence motif" description="'KMSKS' region" evidence="1">
    <location>
        <begin position="250"/>
        <end position="254"/>
    </location>
</feature>
<feature type="binding site" evidence="1">
    <location>
        <position position="253"/>
    </location>
    <ligand>
        <name>ATP</name>
        <dbReference type="ChEBI" id="CHEBI:30616"/>
    </ligand>
</feature>
<protein>
    <recommendedName>
        <fullName evidence="1">Glutamate--tRNA ligase 1</fullName>
        <ecNumber evidence="1">6.1.1.17</ecNumber>
    </recommendedName>
    <alternativeName>
        <fullName evidence="1">Glutamyl-tRNA synthetase 1</fullName>
        <shortName evidence="1">GluRS 1</shortName>
    </alternativeName>
</protein>
<comment type="function">
    <text evidence="1">Catalyzes the attachment of glutamate to tRNA(Glu) in a two-step reaction: glutamate is first activated by ATP to form Glu-AMP and then transferred to the acceptor end of tRNA(Glu).</text>
</comment>
<comment type="catalytic activity">
    <reaction evidence="1">
        <text>tRNA(Glu) + L-glutamate + ATP = L-glutamyl-tRNA(Glu) + AMP + diphosphate</text>
        <dbReference type="Rhea" id="RHEA:23540"/>
        <dbReference type="Rhea" id="RHEA-COMP:9663"/>
        <dbReference type="Rhea" id="RHEA-COMP:9680"/>
        <dbReference type="ChEBI" id="CHEBI:29985"/>
        <dbReference type="ChEBI" id="CHEBI:30616"/>
        <dbReference type="ChEBI" id="CHEBI:33019"/>
        <dbReference type="ChEBI" id="CHEBI:78442"/>
        <dbReference type="ChEBI" id="CHEBI:78520"/>
        <dbReference type="ChEBI" id="CHEBI:456215"/>
        <dbReference type="EC" id="6.1.1.17"/>
    </reaction>
</comment>
<comment type="subunit">
    <text evidence="1">Monomer.</text>
</comment>
<comment type="subcellular location">
    <subcellularLocation>
        <location evidence="1">Cytoplasm</location>
    </subcellularLocation>
</comment>
<comment type="similarity">
    <text evidence="1">Belongs to the class-I aminoacyl-tRNA synthetase family. Glutamate--tRNA ligase type 1 subfamily.</text>
</comment>
<comment type="sequence caution" evidence="2">
    <conflict type="erroneous initiation">
        <sequence resource="EMBL-CDS" id="ABQ60984"/>
    </conflict>
</comment>
<proteinExistence type="inferred from homology"/>
<accession>A5VQF9</accession>
<dbReference type="EC" id="6.1.1.17" evidence="1"/>
<dbReference type="EMBL" id="CP000708">
    <property type="protein sequence ID" value="ABQ60984.1"/>
    <property type="status" value="ALT_INIT"/>
    <property type="molecule type" value="Genomic_DNA"/>
</dbReference>
<dbReference type="SMR" id="A5VQF9"/>
<dbReference type="KEGG" id="bov:BOV_0983"/>
<dbReference type="HOGENOM" id="CLU_015768_6_1_5"/>
<dbReference type="PhylomeDB" id="A5VQF9"/>
<dbReference type="Proteomes" id="UP000006383">
    <property type="component" value="Chromosome I"/>
</dbReference>
<dbReference type="GO" id="GO:0005737">
    <property type="term" value="C:cytoplasm"/>
    <property type="evidence" value="ECO:0007669"/>
    <property type="project" value="UniProtKB-SubCell"/>
</dbReference>
<dbReference type="GO" id="GO:0005524">
    <property type="term" value="F:ATP binding"/>
    <property type="evidence" value="ECO:0007669"/>
    <property type="project" value="UniProtKB-UniRule"/>
</dbReference>
<dbReference type="GO" id="GO:0004818">
    <property type="term" value="F:glutamate-tRNA ligase activity"/>
    <property type="evidence" value="ECO:0007669"/>
    <property type="project" value="UniProtKB-UniRule"/>
</dbReference>
<dbReference type="GO" id="GO:0000049">
    <property type="term" value="F:tRNA binding"/>
    <property type="evidence" value="ECO:0007669"/>
    <property type="project" value="InterPro"/>
</dbReference>
<dbReference type="GO" id="GO:0008270">
    <property type="term" value="F:zinc ion binding"/>
    <property type="evidence" value="ECO:0007669"/>
    <property type="project" value="InterPro"/>
</dbReference>
<dbReference type="GO" id="GO:0006424">
    <property type="term" value="P:glutamyl-tRNA aminoacylation"/>
    <property type="evidence" value="ECO:0007669"/>
    <property type="project" value="UniProtKB-UniRule"/>
</dbReference>
<dbReference type="CDD" id="cd00808">
    <property type="entry name" value="GluRS_core"/>
    <property type="match status" value="1"/>
</dbReference>
<dbReference type="Gene3D" id="1.10.10.350">
    <property type="match status" value="1"/>
</dbReference>
<dbReference type="Gene3D" id="3.40.50.620">
    <property type="entry name" value="HUPs"/>
    <property type="match status" value="1"/>
</dbReference>
<dbReference type="HAMAP" id="MF_00022">
    <property type="entry name" value="Glu_tRNA_synth_type1"/>
    <property type="match status" value="1"/>
</dbReference>
<dbReference type="InterPro" id="IPR045462">
    <property type="entry name" value="aa-tRNA-synth_I_cd-bd"/>
</dbReference>
<dbReference type="InterPro" id="IPR020751">
    <property type="entry name" value="aa-tRNA-synth_I_codon-bd_sub2"/>
</dbReference>
<dbReference type="InterPro" id="IPR001412">
    <property type="entry name" value="aa-tRNA-synth_I_CS"/>
</dbReference>
<dbReference type="InterPro" id="IPR008925">
    <property type="entry name" value="aa_tRNA-synth_I_cd-bd_sf"/>
</dbReference>
<dbReference type="InterPro" id="IPR004527">
    <property type="entry name" value="Glu-tRNA-ligase_bac/mito"/>
</dbReference>
<dbReference type="InterPro" id="IPR000924">
    <property type="entry name" value="Glu/Gln-tRNA-synth"/>
</dbReference>
<dbReference type="InterPro" id="IPR020058">
    <property type="entry name" value="Glu/Gln-tRNA-synth_Ib_cat-dom"/>
</dbReference>
<dbReference type="InterPro" id="IPR049940">
    <property type="entry name" value="GluQ/Sye"/>
</dbReference>
<dbReference type="InterPro" id="IPR033910">
    <property type="entry name" value="GluRS_core"/>
</dbReference>
<dbReference type="InterPro" id="IPR014729">
    <property type="entry name" value="Rossmann-like_a/b/a_fold"/>
</dbReference>
<dbReference type="NCBIfam" id="TIGR00464">
    <property type="entry name" value="gltX_bact"/>
    <property type="match status" value="1"/>
</dbReference>
<dbReference type="PANTHER" id="PTHR43311">
    <property type="entry name" value="GLUTAMATE--TRNA LIGASE"/>
    <property type="match status" value="1"/>
</dbReference>
<dbReference type="PANTHER" id="PTHR43311:SF2">
    <property type="entry name" value="GLUTAMATE--TRNA LIGASE, MITOCHONDRIAL-RELATED"/>
    <property type="match status" value="1"/>
</dbReference>
<dbReference type="Pfam" id="PF19269">
    <property type="entry name" value="Anticodon_2"/>
    <property type="match status" value="1"/>
</dbReference>
<dbReference type="Pfam" id="PF00749">
    <property type="entry name" value="tRNA-synt_1c"/>
    <property type="match status" value="1"/>
</dbReference>
<dbReference type="PRINTS" id="PR00987">
    <property type="entry name" value="TRNASYNTHGLU"/>
</dbReference>
<dbReference type="SUPFAM" id="SSF48163">
    <property type="entry name" value="An anticodon-binding domain of class I aminoacyl-tRNA synthetases"/>
    <property type="match status" value="1"/>
</dbReference>
<dbReference type="SUPFAM" id="SSF52374">
    <property type="entry name" value="Nucleotidylyl transferase"/>
    <property type="match status" value="1"/>
</dbReference>
<dbReference type="PROSITE" id="PS00178">
    <property type="entry name" value="AA_TRNA_LIGASE_I"/>
    <property type="match status" value="1"/>
</dbReference>